<reference key="1">
    <citation type="journal article" date="2004" name="Nucleic Acids Res.">
        <title>Whole genome comparisons of serotype 4b and 1/2a strains of the food-borne pathogen Listeria monocytogenes reveal new insights into the core genome components of this species.</title>
        <authorList>
            <person name="Nelson K.E."/>
            <person name="Fouts D.E."/>
            <person name="Mongodin E.F."/>
            <person name="Ravel J."/>
            <person name="DeBoy R.T."/>
            <person name="Kolonay J.F."/>
            <person name="Rasko D.A."/>
            <person name="Angiuoli S.V."/>
            <person name="Gill S.R."/>
            <person name="Paulsen I.T."/>
            <person name="Peterson J.D."/>
            <person name="White O."/>
            <person name="Nelson W.C."/>
            <person name="Nierman W.C."/>
            <person name="Beanan M.J."/>
            <person name="Brinkac L.M."/>
            <person name="Daugherty S.C."/>
            <person name="Dodson R.J."/>
            <person name="Durkin A.S."/>
            <person name="Madupu R."/>
            <person name="Haft D.H."/>
            <person name="Selengut J."/>
            <person name="Van Aken S.E."/>
            <person name="Khouri H.M."/>
            <person name="Fedorova N."/>
            <person name="Forberger H.A."/>
            <person name="Tran B."/>
            <person name="Kathariou S."/>
            <person name="Wonderling L.D."/>
            <person name="Uhlich G.A."/>
            <person name="Bayles D.O."/>
            <person name="Luchansky J.B."/>
            <person name="Fraser C.M."/>
        </authorList>
    </citation>
    <scope>NUCLEOTIDE SEQUENCE [LARGE SCALE GENOMIC DNA]</scope>
    <source>
        <strain>F2365</strain>
    </source>
</reference>
<proteinExistence type="inferred from homology"/>
<name>LEXA_LISMF</name>
<evidence type="ECO:0000255" key="1">
    <source>
        <dbReference type="HAMAP-Rule" id="MF_00015"/>
    </source>
</evidence>
<accession>Q720B9</accession>
<dbReference type="EC" id="3.4.21.88" evidence="1"/>
<dbReference type="EMBL" id="AE017262">
    <property type="protein sequence ID" value="AAT04095.1"/>
    <property type="molecule type" value="Genomic_DNA"/>
</dbReference>
<dbReference type="RefSeq" id="WP_003723438.1">
    <property type="nucleotide sequence ID" value="NC_002973.6"/>
</dbReference>
<dbReference type="SMR" id="Q720B9"/>
<dbReference type="MEROPS" id="S24.001"/>
<dbReference type="GeneID" id="86846725"/>
<dbReference type="KEGG" id="lmf:LMOf2365_1320"/>
<dbReference type="HOGENOM" id="CLU_066192_45_1_9"/>
<dbReference type="GO" id="GO:0003677">
    <property type="term" value="F:DNA binding"/>
    <property type="evidence" value="ECO:0007669"/>
    <property type="project" value="UniProtKB-UniRule"/>
</dbReference>
<dbReference type="GO" id="GO:0004252">
    <property type="term" value="F:serine-type endopeptidase activity"/>
    <property type="evidence" value="ECO:0007669"/>
    <property type="project" value="UniProtKB-UniRule"/>
</dbReference>
<dbReference type="GO" id="GO:0006281">
    <property type="term" value="P:DNA repair"/>
    <property type="evidence" value="ECO:0007669"/>
    <property type="project" value="UniProtKB-UniRule"/>
</dbReference>
<dbReference type="GO" id="GO:0006260">
    <property type="term" value="P:DNA replication"/>
    <property type="evidence" value="ECO:0007669"/>
    <property type="project" value="UniProtKB-UniRule"/>
</dbReference>
<dbReference type="GO" id="GO:0045892">
    <property type="term" value="P:negative regulation of DNA-templated transcription"/>
    <property type="evidence" value="ECO:0007669"/>
    <property type="project" value="UniProtKB-UniRule"/>
</dbReference>
<dbReference type="GO" id="GO:0006508">
    <property type="term" value="P:proteolysis"/>
    <property type="evidence" value="ECO:0007669"/>
    <property type="project" value="InterPro"/>
</dbReference>
<dbReference type="GO" id="GO:0009432">
    <property type="term" value="P:SOS response"/>
    <property type="evidence" value="ECO:0007669"/>
    <property type="project" value="UniProtKB-UniRule"/>
</dbReference>
<dbReference type="CDD" id="cd00090">
    <property type="entry name" value="HTH_ARSR"/>
    <property type="match status" value="1"/>
</dbReference>
<dbReference type="CDD" id="cd06529">
    <property type="entry name" value="S24_LexA-like"/>
    <property type="match status" value="1"/>
</dbReference>
<dbReference type="FunFam" id="1.10.10.10:FF:000009">
    <property type="entry name" value="LexA repressor"/>
    <property type="match status" value="1"/>
</dbReference>
<dbReference type="FunFam" id="2.10.109.10:FF:000001">
    <property type="entry name" value="LexA repressor"/>
    <property type="match status" value="1"/>
</dbReference>
<dbReference type="Gene3D" id="2.10.109.10">
    <property type="entry name" value="Umud Fragment, subunit A"/>
    <property type="match status" value="1"/>
</dbReference>
<dbReference type="Gene3D" id="1.10.10.10">
    <property type="entry name" value="Winged helix-like DNA-binding domain superfamily/Winged helix DNA-binding domain"/>
    <property type="match status" value="1"/>
</dbReference>
<dbReference type="HAMAP" id="MF_00015">
    <property type="entry name" value="LexA"/>
    <property type="match status" value="1"/>
</dbReference>
<dbReference type="InterPro" id="IPR011991">
    <property type="entry name" value="ArsR-like_HTH"/>
</dbReference>
<dbReference type="InterPro" id="IPR006200">
    <property type="entry name" value="LexA"/>
</dbReference>
<dbReference type="InterPro" id="IPR039418">
    <property type="entry name" value="LexA-like"/>
</dbReference>
<dbReference type="InterPro" id="IPR036286">
    <property type="entry name" value="LexA/Signal_pep-like_sf"/>
</dbReference>
<dbReference type="InterPro" id="IPR006199">
    <property type="entry name" value="LexA_DNA-bd_dom"/>
</dbReference>
<dbReference type="InterPro" id="IPR050077">
    <property type="entry name" value="LexA_repressor"/>
</dbReference>
<dbReference type="InterPro" id="IPR006197">
    <property type="entry name" value="Peptidase_S24_LexA"/>
</dbReference>
<dbReference type="InterPro" id="IPR015927">
    <property type="entry name" value="Peptidase_S24_S26A/B/C"/>
</dbReference>
<dbReference type="InterPro" id="IPR036388">
    <property type="entry name" value="WH-like_DNA-bd_sf"/>
</dbReference>
<dbReference type="InterPro" id="IPR036390">
    <property type="entry name" value="WH_DNA-bd_sf"/>
</dbReference>
<dbReference type="NCBIfam" id="TIGR00498">
    <property type="entry name" value="lexA"/>
    <property type="match status" value="1"/>
</dbReference>
<dbReference type="PANTHER" id="PTHR33516">
    <property type="entry name" value="LEXA REPRESSOR"/>
    <property type="match status" value="1"/>
</dbReference>
<dbReference type="PANTHER" id="PTHR33516:SF2">
    <property type="entry name" value="LEXA REPRESSOR-RELATED"/>
    <property type="match status" value="1"/>
</dbReference>
<dbReference type="Pfam" id="PF01726">
    <property type="entry name" value="LexA_DNA_bind"/>
    <property type="match status" value="1"/>
</dbReference>
<dbReference type="Pfam" id="PF00717">
    <property type="entry name" value="Peptidase_S24"/>
    <property type="match status" value="1"/>
</dbReference>
<dbReference type="PRINTS" id="PR00726">
    <property type="entry name" value="LEXASERPTASE"/>
</dbReference>
<dbReference type="SUPFAM" id="SSF51306">
    <property type="entry name" value="LexA/Signal peptidase"/>
    <property type="match status" value="1"/>
</dbReference>
<dbReference type="SUPFAM" id="SSF46785">
    <property type="entry name" value="Winged helix' DNA-binding domain"/>
    <property type="match status" value="1"/>
</dbReference>
<protein>
    <recommendedName>
        <fullName evidence="1">LexA repressor</fullName>
        <ecNumber evidence="1">3.4.21.88</ecNumber>
    </recommendedName>
</protein>
<organism>
    <name type="scientific">Listeria monocytogenes serotype 4b (strain F2365)</name>
    <dbReference type="NCBI Taxonomy" id="265669"/>
    <lineage>
        <taxon>Bacteria</taxon>
        <taxon>Bacillati</taxon>
        <taxon>Bacillota</taxon>
        <taxon>Bacilli</taxon>
        <taxon>Bacillales</taxon>
        <taxon>Listeriaceae</taxon>
        <taxon>Listeria</taxon>
    </lineage>
</organism>
<feature type="chain" id="PRO_0000170052" description="LexA repressor">
    <location>
        <begin position="1"/>
        <end position="204"/>
    </location>
</feature>
<feature type="DNA-binding region" description="H-T-H motif" evidence="1">
    <location>
        <begin position="27"/>
        <end position="47"/>
    </location>
</feature>
<feature type="active site" description="For autocatalytic cleavage activity" evidence="1">
    <location>
        <position position="126"/>
    </location>
</feature>
<feature type="active site" description="For autocatalytic cleavage activity" evidence="1">
    <location>
        <position position="164"/>
    </location>
</feature>
<feature type="site" description="Cleavage; by autolysis" evidence="1">
    <location>
        <begin position="90"/>
        <end position="91"/>
    </location>
</feature>
<comment type="function">
    <text evidence="1">Represses a number of genes involved in the response to DNA damage (SOS response), including recA and lexA. In the presence of single-stranded DNA, RecA interacts with LexA causing an autocatalytic cleavage which disrupts the DNA-binding part of LexA, leading to derepression of the SOS regulon and eventually DNA repair.</text>
</comment>
<comment type="catalytic activity">
    <reaction evidence="1">
        <text>Hydrolysis of Ala-|-Gly bond in repressor LexA.</text>
        <dbReference type="EC" id="3.4.21.88"/>
    </reaction>
</comment>
<comment type="subunit">
    <text evidence="1">Homodimer.</text>
</comment>
<comment type="similarity">
    <text evidence="1">Belongs to the peptidase S24 family.</text>
</comment>
<sequence length="204" mass="22637">MKISKRQQDIYEFIKSEVKEKGYPPSVREIGEAVGLASSSTVHGHLARLEGKGLIRRDPTKPRAIEILSLEDEAETPNVVNIPIIGKVTAGMPITAIENIDEYFPLPEYMAAGETNVFMLEIDGESMINAGILDGDKVIVRQQSSAINGEIVVAMTDENEATCKRFYKEANHFRLQPENDALEPILLNNVTILGKVIGLYRDIR</sequence>
<gene>
    <name evidence="1" type="primary">lexA</name>
    <name type="ordered locus">LMOf2365_1320</name>
</gene>
<keyword id="KW-0068">Autocatalytic cleavage</keyword>
<keyword id="KW-0227">DNA damage</keyword>
<keyword id="KW-0234">DNA repair</keyword>
<keyword id="KW-0235">DNA replication</keyword>
<keyword id="KW-0238">DNA-binding</keyword>
<keyword id="KW-0378">Hydrolase</keyword>
<keyword id="KW-0678">Repressor</keyword>
<keyword id="KW-0742">SOS response</keyword>
<keyword id="KW-0804">Transcription</keyword>
<keyword id="KW-0805">Transcription regulation</keyword>